<sequence>MGRRYFGTDGIRGTVGEAPITPDFVLRLGYAAGKVLAGTADVAAGARPTVLIGKDTRVSGYMLEAALEAGFSAAGVDVMLAGPMPTPGVAYLTRALRLSAGVVISASHNPYQDNGIKFFSADGNKLPDETEAAIEAWLDKPLECASSDRLGKARRLEDAAGRYIEFCKSTFPAAYDLRGLKLVIDCAHGAAYQIAPHVFHELGADVIPIGVAPNGFNINDGVGATAPDALVRAVRANHADLGIALDGDADRLQVVDSTGRLYNGDELLYVLVKDRIATAGKVDGAVGTLMTNLAVEVALQREGVPFVRAAVGDRYVLEQLRERGWQLGAEGSGHILSLDRHSTGDGIVSALLVLAALKRSDRTLAQMLDGVTLFPQKLINVRMKPGADWKGSASIRAAIDAAEGALAGSGRVLIRASGTEPVLRVMVEAQQAADATRHAEAIADAVRIATS</sequence>
<proteinExistence type="inferred from homology"/>
<gene>
    <name evidence="1" type="primary">glmM</name>
    <name type="ordered locus">BamMC406_1188</name>
</gene>
<evidence type="ECO:0000255" key="1">
    <source>
        <dbReference type="HAMAP-Rule" id="MF_01554"/>
    </source>
</evidence>
<reference key="1">
    <citation type="submission" date="2008-04" db="EMBL/GenBank/DDBJ databases">
        <title>Complete sequence of chromosome 1 of Burkholderia ambifaria MC40-6.</title>
        <authorList>
            <person name="Copeland A."/>
            <person name="Lucas S."/>
            <person name="Lapidus A."/>
            <person name="Glavina del Rio T."/>
            <person name="Dalin E."/>
            <person name="Tice H."/>
            <person name="Pitluck S."/>
            <person name="Chain P."/>
            <person name="Malfatti S."/>
            <person name="Shin M."/>
            <person name="Vergez L."/>
            <person name="Lang D."/>
            <person name="Schmutz J."/>
            <person name="Larimer F."/>
            <person name="Land M."/>
            <person name="Hauser L."/>
            <person name="Kyrpides N."/>
            <person name="Lykidis A."/>
            <person name="Ramette A."/>
            <person name="Konstantinidis K."/>
            <person name="Tiedje J."/>
            <person name="Richardson P."/>
        </authorList>
    </citation>
    <scope>NUCLEOTIDE SEQUENCE [LARGE SCALE GENOMIC DNA]</scope>
    <source>
        <strain>MC40-6</strain>
    </source>
</reference>
<dbReference type="EC" id="5.4.2.10" evidence="1"/>
<dbReference type="EMBL" id="CP001025">
    <property type="protein sequence ID" value="ACB63679.1"/>
    <property type="molecule type" value="Genomic_DNA"/>
</dbReference>
<dbReference type="RefSeq" id="WP_012363554.1">
    <property type="nucleotide sequence ID" value="NC_010551.1"/>
</dbReference>
<dbReference type="SMR" id="B1YMW5"/>
<dbReference type="KEGG" id="bac:BamMC406_1188"/>
<dbReference type="HOGENOM" id="CLU_016950_7_0_4"/>
<dbReference type="OrthoDB" id="9803322at2"/>
<dbReference type="Proteomes" id="UP000001680">
    <property type="component" value="Chromosome 1"/>
</dbReference>
<dbReference type="GO" id="GO:0005829">
    <property type="term" value="C:cytosol"/>
    <property type="evidence" value="ECO:0007669"/>
    <property type="project" value="TreeGrafter"/>
</dbReference>
<dbReference type="GO" id="GO:0000287">
    <property type="term" value="F:magnesium ion binding"/>
    <property type="evidence" value="ECO:0007669"/>
    <property type="project" value="UniProtKB-UniRule"/>
</dbReference>
<dbReference type="GO" id="GO:0008966">
    <property type="term" value="F:phosphoglucosamine mutase activity"/>
    <property type="evidence" value="ECO:0007669"/>
    <property type="project" value="UniProtKB-UniRule"/>
</dbReference>
<dbReference type="GO" id="GO:0004615">
    <property type="term" value="F:phosphomannomutase activity"/>
    <property type="evidence" value="ECO:0007669"/>
    <property type="project" value="TreeGrafter"/>
</dbReference>
<dbReference type="GO" id="GO:0005975">
    <property type="term" value="P:carbohydrate metabolic process"/>
    <property type="evidence" value="ECO:0007669"/>
    <property type="project" value="InterPro"/>
</dbReference>
<dbReference type="GO" id="GO:0009252">
    <property type="term" value="P:peptidoglycan biosynthetic process"/>
    <property type="evidence" value="ECO:0007669"/>
    <property type="project" value="TreeGrafter"/>
</dbReference>
<dbReference type="GO" id="GO:0006048">
    <property type="term" value="P:UDP-N-acetylglucosamine biosynthetic process"/>
    <property type="evidence" value="ECO:0007669"/>
    <property type="project" value="TreeGrafter"/>
</dbReference>
<dbReference type="CDD" id="cd05802">
    <property type="entry name" value="GlmM"/>
    <property type="match status" value="1"/>
</dbReference>
<dbReference type="FunFam" id="3.30.310.50:FF:000001">
    <property type="entry name" value="Phosphoglucosamine mutase"/>
    <property type="match status" value="1"/>
</dbReference>
<dbReference type="FunFam" id="3.40.120.10:FF:000001">
    <property type="entry name" value="Phosphoglucosamine mutase"/>
    <property type="match status" value="1"/>
</dbReference>
<dbReference type="FunFam" id="3.40.120.10:FF:000003">
    <property type="entry name" value="Phosphoglucosamine mutase"/>
    <property type="match status" value="1"/>
</dbReference>
<dbReference type="Gene3D" id="3.40.120.10">
    <property type="entry name" value="Alpha-D-Glucose-1,6-Bisphosphate, subunit A, domain 3"/>
    <property type="match status" value="3"/>
</dbReference>
<dbReference type="Gene3D" id="3.30.310.50">
    <property type="entry name" value="Alpha-D-phosphohexomutase, C-terminal domain"/>
    <property type="match status" value="1"/>
</dbReference>
<dbReference type="HAMAP" id="MF_01554_B">
    <property type="entry name" value="GlmM_B"/>
    <property type="match status" value="1"/>
</dbReference>
<dbReference type="InterPro" id="IPR005844">
    <property type="entry name" value="A-D-PHexomutase_a/b/a-I"/>
</dbReference>
<dbReference type="InterPro" id="IPR016055">
    <property type="entry name" value="A-D-PHexomutase_a/b/a-I/II/III"/>
</dbReference>
<dbReference type="InterPro" id="IPR005845">
    <property type="entry name" value="A-D-PHexomutase_a/b/a-II"/>
</dbReference>
<dbReference type="InterPro" id="IPR005846">
    <property type="entry name" value="A-D-PHexomutase_a/b/a-III"/>
</dbReference>
<dbReference type="InterPro" id="IPR005843">
    <property type="entry name" value="A-D-PHexomutase_C"/>
</dbReference>
<dbReference type="InterPro" id="IPR036900">
    <property type="entry name" value="A-D-PHexomutase_C_sf"/>
</dbReference>
<dbReference type="InterPro" id="IPR016066">
    <property type="entry name" value="A-D-PHexomutase_CS"/>
</dbReference>
<dbReference type="InterPro" id="IPR005841">
    <property type="entry name" value="Alpha-D-phosphohexomutase_SF"/>
</dbReference>
<dbReference type="InterPro" id="IPR006352">
    <property type="entry name" value="GlmM_bact"/>
</dbReference>
<dbReference type="InterPro" id="IPR050060">
    <property type="entry name" value="Phosphoglucosamine_mutase"/>
</dbReference>
<dbReference type="NCBIfam" id="TIGR01455">
    <property type="entry name" value="glmM"/>
    <property type="match status" value="1"/>
</dbReference>
<dbReference type="NCBIfam" id="NF008139">
    <property type="entry name" value="PRK10887.1"/>
    <property type="match status" value="1"/>
</dbReference>
<dbReference type="PANTHER" id="PTHR42946:SF1">
    <property type="entry name" value="PHOSPHOGLUCOMUTASE (ALPHA-D-GLUCOSE-1,6-BISPHOSPHATE-DEPENDENT)"/>
    <property type="match status" value="1"/>
</dbReference>
<dbReference type="PANTHER" id="PTHR42946">
    <property type="entry name" value="PHOSPHOHEXOSE MUTASE"/>
    <property type="match status" value="1"/>
</dbReference>
<dbReference type="Pfam" id="PF02878">
    <property type="entry name" value="PGM_PMM_I"/>
    <property type="match status" value="1"/>
</dbReference>
<dbReference type="Pfam" id="PF02879">
    <property type="entry name" value="PGM_PMM_II"/>
    <property type="match status" value="1"/>
</dbReference>
<dbReference type="Pfam" id="PF02880">
    <property type="entry name" value="PGM_PMM_III"/>
    <property type="match status" value="1"/>
</dbReference>
<dbReference type="Pfam" id="PF00408">
    <property type="entry name" value="PGM_PMM_IV"/>
    <property type="match status" value="1"/>
</dbReference>
<dbReference type="PRINTS" id="PR00509">
    <property type="entry name" value="PGMPMM"/>
</dbReference>
<dbReference type="SUPFAM" id="SSF55957">
    <property type="entry name" value="Phosphoglucomutase, C-terminal domain"/>
    <property type="match status" value="1"/>
</dbReference>
<dbReference type="SUPFAM" id="SSF53738">
    <property type="entry name" value="Phosphoglucomutase, first 3 domains"/>
    <property type="match status" value="3"/>
</dbReference>
<dbReference type="PROSITE" id="PS00710">
    <property type="entry name" value="PGM_PMM"/>
    <property type="match status" value="1"/>
</dbReference>
<organism>
    <name type="scientific">Burkholderia ambifaria (strain MC40-6)</name>
    <dbReference type="NCBI Taxonomy" id="398577"/>
    <lineage>
        <taxon>Bacteria</taxon>
        <taxon>Pseudomonadati</taxon>
        <taxon>Pseudomonadota</taxon>
        <taxon>Betaproteobacteria</taxon>
        <taxon>Burkholderiales</taxon>
        <taxon>Burkholderiaceae</taxon>
        <taxon>Burkholderia</taxon>
        <taxon>Burkholderia cepacia complex</taxon>
    </lineage>
</organism>
<feature type="chain" id="PRO_1000201066" description="Phosphoglucosamine mutase">
    <location>
        <begin position="1"/>
        <end position="451"/>
    </location>
</feature>
<feature type="active site" description="Phosphoserine intermediate" evidence="1">
    <location>
        <position position="107"/>
    </location>
</feature>
<feature type="binding site" description="via phosphate group" evidence="1">
    <location>
        <position position="107"/>
    </location>
    <ligand>
        <name>Mg(2+)</name>
        <dbReference type="ChEBI" id="CHEBI:18420"/>
    </ligand>
</feature>
<feature type="binding site" evidence="1">
    <location>
        <position position="246"/>
    </location>
    <ligand>
        <name>Mg(2+)</name>
        <dbReference type="ChEBI" id="CHEBI:18420"/>
    </ligand>
</feature>
<feature type="binding site" evidence="1">
    <location>
        <position position="248"/>
    </location>
    <ligand>
        <name>Mg(2+)</name>
        <dbReference type="ChEBI" id="CHEBI:18420"/>
    </ligand>
</feature>
<feature type="binding site" evidence="1">
    <location>
        <position position="250"/>
    </location>
    <ligand>
        <name>Mg(2+)</name>
        <dbReference type="ChEBI" id="CHEBI:18420"/>
    </ligand>
</feature>
<feature type="modified residue" description="Phosphoserine" evidence="1">
    <location>
        <position position="107"/>
    </location>
</feature>
<accession>B1YMW5</accession>
<name>GLMM_BURA4</name>
<comment type="function">
    <text evidence="1">Catalyzes the conversion of glucosamine-6-phosphate to glucosamine-1-phosphate.</text>
</comment>
<comment type="catalytic activity">
    <reaction evidence="1">
        <text>alpha-D-glucosamine 1-phosphate = D-glucosamine 6-phosphate</text>
        <dbReference type="Rhea" id="RHEA:23424"/>
        <dbReference type="ChEBI" id="CHEBI:58516"/>
        <dbReference type="ChEBI" id="CHEBI:58725"/>
        <dbReference type="EC" id="5.4.2.10"/>
    </reaction>
</comment>
<comment type="cofactor">
    <cofactor evidence="1">
        <name>Mg(2+)</name>
        <dbReference type="ChEBI" id="CHEBI:18420"/>
    </cofactor>
    <text evidence="1">Binds 1 Mg(2+) ion per subunit.</text>
</comment>
<comment type="PTM">
    <text evidence="1">Activated by phosphorylation.</text>
</comment>
<comment type="similarity">
    <text evidence="1">Belongs to the phosphohexose mutase family.</text>
</comment>
<protein>
    <recommendedName>
        <fullName evidence="1">Phosphoglucosamine mutase</fullName>
        <ecNumber evidence="1">5.4.2.10</ecNumber>
    </recommendedName>
</protein>
<keyword id="KW-0413">Isomerase</keyword>
<keyword id="KW-0460">Magnesium</keyword>
<keyword id="KW-0479">Metal-binding</keyword>
<keyword id="KW-0597">Phosphoprotein</keyword>